<reference key="1">
    <citation type="journal article" date="2004" name="Proc. Natl. Acad. Sci. U.S.A.">
        <title>Complete genomes of two clinical Staphylococcus aureus strains: evidence for the rapid evolution of virulence and drug resistance.</title>
        <authorList>
            <person name="Holden M.T.G."/>
            <person name="Feil E.J."/>
            <person name="Lindsay J.A."/>
            <person name="Peacock S.J."/>
            <person name="Day N.P.J."/>
            <person name="Enright M.C."/>
            <person name="Foster T.J."/>
            <person name="Moore C.E."/>
            <person name="Hurst L."/>
            <person name="Atkin R."/>
            <person name="Barron A."/>
            <person name="Bason N."/>
            <person name="Bentley S.D."/>
            <person name="Chillingworth C."/>
            <person name="Chillingworth T."/>
            <person name="Churcher C."/>
            <person name="Clark L."/>
            <person name="Corton C."/>
            <person name="Cronin A."/>
            <person name="Doggett J."/>
            <person name="Dowd L."/>
            <person name="Feltwell T."/>
            <person name="Hance Z."/>
            <person name="Harris B."/>
            <person name="Hauser H."/>
            <person name="Holroyd S."/>
            <person name="Jagels K."/>
            <person name="James K.D."/>
            <person name="Lennard N."/>
            <person name="Line A."/>
            <person name="Mayes R."/>
            <person name="Moule S."/>
            <person name="Mungall K."/>
            <person name="Ormond D."/>
            <person name="Quail M.A."/>
            <person name="Rabbinowitsch E."/>
            <person name="Rutherford K.M."/>
            <person name="Sanders M."/>
            <person name="Sharp S."/>
            <person name="Simmonds M."/>
            <person name="Stevens K."/>
            <person name="Whitehead S."/>
            <person name="Barrell B.G."/>
            <person name="Spratt B.G."/>
            <person name="Parkhill J."/>
        </authorList>
    </citation>
    <scope>NUCLEOTIDE SEQUENCE [LARGE SCALE GENOMIC DNA]</scope>
    <source>
        <strain>MRSA252</strain>
    </source>
</reference>
<evidence type="ECO:0000250" key="1">
    <source>
        <dbReference type="UniProtKB" id="Q2G1E1"/>
    </source>
</evidence>
<evidence type="ECO:0000255" key="2">
    <source>
        <dbReference type="PROSITE-ProRule" id="PRU00169"/>
    </source>
</evidence>
<evidence type="ECO:0000255" key="3">
    <source>
        <dbReference type="PROSITE-ProRule" id="PRU00593"/>
    </source>
</evidence>
<evidence type="ECO:0000305" key="4"/>
<name>HPTR_STAAR</name>
<organism>
    <name type="scientific">Staphylococcus aureus (strain MRSA252)</name>
    <dbReference type="NCBI Taxonomy" id="282458"/>
    <lineage>
        <taxon>Bacteria</taxon>
        <taxon>Bacillati</taxon>
        <taxon>Bacillota</taxon>
        <taxon>Bacilli</taxon>
        <taxon>Bacillales</taxon>
        <taxon>Staphylococcaceae</taxon>
        <taxon>Staphylococcus</taxon>
    </lineage>
</organism>
<feature type="chain" id="PRO_0000299110" description="Transcriptional regulatory protein HptR">
    <location>
        <begin position="1"/>
        <end position="252"/>
    </location>
</feature>
<feature type="domain" description="Response regulatory" evidence="2">
    <location>
        <begin position="3"/>
        <end position="118"/>
    </location>
</feature>
<feature type="domain" description="HTH araC/xylS-type" evidence="3">
    <location>
        <begin position="153"/>
        <end position="250"/>
    </location>
</feature>
<feature type="DNA-binding region" description="H-T-H motif" evidence="3">
    <location>
        <begin position="170"/>
        <end position="191"/>
    </location>
</feature>
<feature type="DNA-binding region" description="H-T-H motif" evidence="3">
    <location>
        <begin position="217"/>
        <end position="240"/>
    </location>
</feature>
<feature type="modified residue" description="4-aspartylphosphate" evidence="2">
    <location>
        <position position="55"/>
    </location>
</feature>
<sequence>MFKVVICDDERIIREGLKQIIPWGDYHFNTIYTAKDGVEALSLIQQHQPELVITDIRMPRKNGVDLLNDIAHLDCNVIILSSYDDFEYMKAGIQHHVLDYLLKPVDHAQLEVILGRLVRTLLEQQSQNGRSLAPCHDAFQPLLKVEYDDYYVNQIVDQIKQSYQTKVTVSDLIQHIDVSESYAMRTFKDHVGITIVDYLNRYRILQSLQLLDRHYKHYEIADKVGFSEYKMFSYHFKKYLQMSPSDYCKQAK</sequence>
<proteinExistence type="inferred from homology"/>
<accession>Q6GK93</accession>
<gene>
    <name type="primary">hptR</name>
    <name type="ordered locus">SAR0214</name>
</gene>
<keyword id="KW-0963">Cytoplasm</keyword>
<keyword id="KW-0238">DNA-binding</keyword>
<keyword id="KW-0597">Phosphoprotein</keyword>
<keyword id="KW-0804">Transcription</keyword>
<keyword id="KW-0805">Transcription regulation</keyword>
<keyword id="KW-0902">Two-component regulatory system</keyword>
<protein>
    <recommendedName>
        <fullName>Transcriptional regulatory protein HptR</fullName>
    </recommendedName>
</protein>
<comment type="function">
    <text evidence="1">Member of the two-component regulatory system HptS/HptR that regulates genes involved in hexose phosphate transport system in response to changes in extracellular phosphate sources. Activates uhpT expression to facilitate glucose-6-phosphate/G6P utilization by directly binding to its promoter. Antagonizes CcpA-dependent transcription of a subset of CcpA-regulated genes involved in antibiotic susceptibility.</text>
</comment>
<comment type="subcellular location">
    <subcellularLocation>
        <location evidence="4">Cytoplasm</location>
    </subcellularLocation>
</comment>
<comment type="PTM">
    <text evidence="1">Phosphorylated by HptS.</text>
</comment>
<dbReference type="EMBL" id="BX571856">
    <property type="protein sequence ID" value="CAG39241.1"/>
    <property type="molecule type" value="Genomic_DNA"/>
</dbReference>
<dbReference type="RefSeq" id="WP_000477517.1">
    <property type="nucleotide sequence ID" value="NC_002952.2"/>
</dbReference>
<dbReference type="SMR" id="Q6GK93"/>
<dbReference type="KEGG" id="sar:SAR0214"/>
<dbReference type="HOGENOM" id="CLU_000445_5_1_9"/>
<dbReference type="Proteomes" id="UP000000596">
    <property type="component" value="Chromosome"/>
</dbReference>
<dbReference type="GO" id="GO:0005737">
    <property type="term" value="C:cytoplasm"/>
    <property type="evidence" value="ECO:0007669"/>
    <property type="project" value="UniProtKB-SubCell"/>
</dbReference>
<dbReference type="GO" id="GO:0003700">
    <property type="term" value="F:DNA-binding transcription factor activity"/>
    <property type="evidence" value="ECO:0007669"/>
    <property type="project" value="InterPro"/>
</dbReference>
<dbReference type="GO" id="GO:0043565">
    <property type="term" value="F:sequence-specific DNA binding"/>
    <property type="evidence" value="ECO:0007669"/>
    <property type="project" value="InterPro"/>
</dbReference>
<dbReference type="GO" id="GO:0000160">
    <property type="term" value="P:phosphorelay signal transduction system"/>
    <property type="evidence" value="ECO:0007669"/>
    <property type="project" value="UniProtKB-KW"/>
</dbReference>
<dbReference type="CDD" id="cd17536">
    <property type="entry name" value="REC_YesN-like"/>
    <property type="match status" value="1"/>
</dbReference>
<dbReference type="Gene3D" id="3.40.50.2300">
    <property type="match status" value="1"/>
</dbReference>
<dbReference type="Gene3D" id="1.10.10.60">
    <property type="entry name" value="Homeodomain-like"/>
    <property type="match status" value="2"/>
</dbReference>
<dbReference type="InterPro" id="IPR011006">
    <property type="entry name" value="CheY-like_superfamily"/>
</dbReference>
<dbReference type="InterPro" id="IPR009057">
    <property type="entry name" value="Homeodomain-like_sf"/>
</dbReference>
<dbReference type="InterPro" id="IPR051552">
    <property type="entry name" value="HptR"/>
</dbReference>
<dbReference type="InterPro" id="IPR018060">
    <property type="entry name" value="HTH_AraC"/>
</dbReference>
<dbReference type="InterPro" id="IPR001789">
    <property type="entry name" value="Sig_transdc_resp-reg_receiver"/>
</dbReference>
<dbReference type="PANTHER" id="PTHR42713">
    <property type="entry name" value="HISTIDINE KINASE-RELATED"/>
    <property type="match status" value="1"/>
</dbReference>
<dbReference type="PANTHER" id="PTHR42713:SF3">
    <property type="entry name" value="TRANSCRIPTIONAL REGULATORY PROTEIN HPTR"/>
    <property type="match status" value="1"/>
</dbReference>
<dbReference type="Pfam" id="PF12833">
    <property type="entry name" value="HTH_18"/>
    <property type="match status" value="1"/>
</dbReference>
<dbReference type="Pfam" id="PF00072">
    <property type="entry name" value="Response_reg"/>
    <property type="match status" value="1"/>
</dbReference>
<dbReference type="SMART" id="SM00342">
    <property type="entry name" value="HTH_ARAC"/>
    <property type="match status" value="1"/>
</dbReference>
<dbReference type="SMART" id="SM00448">
    <property type="entry name" value="REC"/>
    <property type="match status" value="1"/>
</dbReference>
<dbReference type="SUPFAM" id="SSF52172">
    <property type="entry name" value="CheY-like"/>
    <property type="match status" value="1"/>
</dbReference>
<dbReference type="SUPFAM" id="SSF46689">
    <property type="entry name" value="Homeodomain-like"/>
    <property type="match status" value="2"/>
</dbReference>
<dbReference type="PROSITE" id="PS01124">
    <property type="entry name" value="HTH_ARAC_FAMILY_2"/>
    <property type="match status" value="1"/>
</dbReference>
<dbReference type="PROSITE" id="PS50110">
    <property type="entry name" value="RESPONSE_REGULATORY"/>
    <property type="match status" value="1"/>
</dbReference>